<proteinExistence type="inferred from homology"/>
<comment type="similarity">
    <text evidence="1">Belongs to the bacterial ribosomal protein bL34 family.</text>
</comment>
<protein>
    <recommendedName>
        <fullName evidence="1">Large ribosomal subunit protein bL34</fullName>
    </recommendedName>
    <alternativeName>
        <fullName evidence="3">50S ribosomal protein L34</fullName>
    </alternativeName>
</protein>
<feature type="chain" id="PRO_1000072217" description="Large ribosomal subunit protein bL34">
    <location>
        <begin position="1"/>
        <end position="44"/>
    </location>
</feature>
<feature type="region of interest" description="Disordered" evidence="2">
    <location>
        <begin position="1"/>
        <end position="44"/>
    </location>
</feature>
<feature type="compositionally biased region" description="Basic residues" evidence="2">
    <location>
        <begin position="1"/>
        <end position="16"/>
    </location>
</feature>
<feature type="compositionally biased region" description="Basic residues" evidence="2">
    <location>
        <begin position="29"/>
        <end position="44"/>
    </location>
</feature>
<sequence length="44" mass="5379">MKRTYQPSQRKRKRTHGFLARKSTPGGRKVLRNRRRTGRWRLTV</sequence>
<name>RL34_FERNB</name>
<accession>A7HLV7</accession>
<keyword id="KW-1185">Reference proteome</keyword>
<keyword id="KW-0687">Ribonucleoprotein</keyword>
<keyword id="KW-0689">Ribosomal protein</keyword>
<reference key="1">
    <citation type="submission" date="2007-07" db="EMBL/GenBank/DDBJ databases">
        <title>Complete sequence of Fervidobacterium nodosum Rt17-B1.</title>
        <authorList>
            <consortium name="US DOE Joint Genome Institute"/>
            <person name="Copeland A."/>
            <person name="Lucas S."/>
            <person name="Lapidus A."/>
            <person name="Barry K."/>
            <person name="Glavina del Rio T."/>
            <person name="Dalin E."/>
            <person name="Tice H."/>
            <person name="Pitluck S."/>
            <person name="Saunders E."/>
            <person name="Brettin T."/>
            <person name="Bruce D."/>
            <person name="Detter J.C."/>
            <person name="Han C."/>
            <person name="Schmutz J."/>
            <person name="Larimer F."/>
            <person name="Land M."/>
            <person name="Hauser L."/>
            <person name="Kyrpides N."/>
            <person name="Mikhailova N."/>
            <person name="Nelson K."/>
            <person name="Gogarten J.P."/>
            <person name="Noll K."/>
            <person name="Richardson P."/>
        </authorList>
    </citation>
    <scope>NUCLEOTIDE SEQUENCE [LARGE SCALE GENOMIC DNA]</scope>
    <source>
        <strain>ATCC 35602 / DSM 5306 / Rt17-B1</strain>
    </source>
</reference>
<organism>
    <name type="scientific">Fervidobacterium nodosum (strain ATCC 35602 / DSM 5306 / Rt17-B1)</name>
    <dbReference type="NCBI Taxonomy" id="381764"/>
    <lineage>
        <taxon>Bacteria</taxon>
        <taxon>Thermotogati</taxon>
        <taxon>Thermotogota</taxon>
        <taxon>Thermotogae</taxon>
        <taxon>Thermotogales</taxon>
        <taxon>Fervidobacteriaceae</taxon>
        <taxon>Fervidobacterium</taxon>
    </lineage>
</organism>
<dbReference type="EMBL" id="CP000771">
    <property type="protein sequence ID" value="ABS60890.1"/>
    <property type="molecule type" value="Genomic_DNA"/>
</dbReference>
<dbReference type="RefSeq" id="WP_011994204.1">
    <property type="nucleotide sequence ID" value="NC_009718.1"/>
</dbReference>
<dbReference type="SMR" id="A7HLV7"/>
<dbReference type="STRING" id="381764.Fnod_1041"/>
<dbReference type="KEGG" id="fno:Fnod_1041"/>
<dbReference type="eggNOG" id="COG0230">
    <property type="taxonomic scope" value="Bacteria"/>
</dbReference>
<dbReference type="HOGENOM" id="CLU_129938_2_0_0"/>
<dbReference type="OrthoDB" id="9804164at2"/>
<dbReference type="Proteomes" id="UP000002415">
    <property type="component" value="Chromosome"/>
</dbReference>
<dbReference type="GO" id="GO:1990904">
    <property type="term" value="C:ribonucleoprotein complex"/>
    <property type="evidence" value="ECO:0007669"/>
    <property type="project" value="UniProtKB-KW"/>
</dbReference>
<dbReference type="GO" id="GO:0005840">
    <property type="term" value="C:ribosome"/>
    <property type="evidence" value="ECO:0007669"/>
    <property type="project" value="UniProtKB-KW"/>
</dbReference>
<dbReference type="GO" id="GO:0003735">
    <property type="term" value="F:structural constituent of ribosome"/>
    <property type="evidence" value="ECO:0007669"/>
    <property type="project" value="InterPro"/>
</dbReference>
<dbReference type="GO" id="GO:0006412">
    <property type="term" value="P:translation"/>
    <property type="evidence" value="ECO:0007669"/>
    <property type="project" value="UniProtKB-UniRule"/>
</dbReference>
<dbReference type="FunFam" id="1.10.287.3980:FF:000001">
    <property type="entry name" value="Mitochondrial ribosomal protein L34"/>
    <property type="match status" value="1"/>
</dbReference>
<dbReference type="Gene3D" id="1.10.287.3980">
    <property type="match status" value="1"/>
</dbReference>
<dbReference type="HAMAP" id="MF_00391">
    <property type="entry name" value="Ribosomal_bL34"/>
    <property type="match status" value="1"/>
</dbReference>
<dbReference type="InterPro" id="IPR000271">
    <property type="entry name" value="Ribosomal_bL34"/>
</dbReference>
<dbReference type="InterPro" id="IPR020939">
    <property type="entry name" value="Ribosomal_bL34_CS"/>
</dbReference>
<dbReference type="NCBIfam" id="TIGR01030">
    <property type="entry name" value="rpmH_bact"/>
    <property type="match status" value="1"/>
</dbReference>
<dbReference type="PANTHER" id="PTHR14503:SF4">
    <property type="entry name" value="LARGE RIBOSOMAL SUBUNIT PROTEIN BL34M"/>
    <property type="match status" value="1"/>
</dbReference>
<dbReference type="PANTHER" id="PTHR14503">
    <property type="entry name" value="MITOCHONDRIAL RIBOSOMAL PROTEIN 34 FAMILY MEMBER"/>
    <property type="match status" value="1"/>
</dbReference>
<dbReference type="Pfam" id="PF00468">
    <property type="entry name" value="Ribosomal_L34"/>
    <property type="match status" value="1"/>
</dbReference>
<dbReference type="PROSITE" id="PS00784">
    <property type="entry name" value="RIBOSOMAL_L34"/>
    <property type="match status" value="1"/>
</dbReference>
<gene>
    <name evidence="1" type="primary">rpmH</name>
    <name type="ordered locus">Fnod_1041</name>
</gene>
<evidence type="ECO:0000255" key="1">
    <source>
        <dbReference type="HAMAP-Rule" id="MF_00391"/>
    </source>
</evidence>
<evidence type="ECO:0000256" key="2">
    <source>
        <dbReference type="SAM" id="MobiDB-lite"/>
    </source>
</evidence>
<evidence type="ECO:0000305" key="3"/>